<protein>
    <recommendedName>
        <fullName evidence="1">Phospho-N-acetylmuramoyl-pentapeptide-transferase</fullName>
        <ecNumber evidence="1">2.7.8.13</ecNumber>
    </recommendedName>
    <alternativeName>
        <fullName evidence="1">UDP-MurNAc-pentapeptide phosphotransferase</fullName>
    </alternativeName>
</protein>
<organism>
    <name type="scientific">Pelagibacter ubique (strain HTCC1062)</name>
    <dbReference type="NCBI Taxonomy" id="335992"/>
    <lineage>
        <taxon>Bacteria</taxon>
        <taxon>Pseudomonadati</taxon>
        <taxon>Pseudomonadota</taxon>
        <taxon>Alphaproteobacteria</taxon>
        <taxon>Candidatus Pelagibacterales</taxon>
        <taxon>Candidatus Pelagibacteraceae</taxon>
        <taxon>Candidatus Pelagibacter</taxon>
    </lineage>
</organism>
<dbReference type="EC" id="2.7.8.13" evidence="1"/>
<dbReference type="EMBL" id="CP000084">
    <property type="protein sequence ID" value="AAZ20852.1"/>
    <property type="molecule type" value="Genomic_DNA"/>
</dbReference>
<dbReference type="RefSeq" id="WP_006997881.1">
    <property type="nucleotide sequence ID" value="NC_007205.1"/>
</dbReference>
<dbReference type="SMR" id="Q4FPK2"/>
<dbReference type="STRING" id="335992.SAR11_0027"/>
<dbReference type="GeneID" id="66294530"/>
<dbReference type="KEGG" id="pub:SAR11_0027"/>
<dbReference type="eggNOG" id="COG0472">
    <property type="taxonomic scope" value="Bacteria"/>
</dbReference>
<dbReference type="HOGENOM" id="CLU_023982_0_0_5"/>
<dbReference type="OrthoDB" id="9805475at2"/>
<dbReference type="UniPathway" id="UPA00219"/>
<dbReference type="Proteomes" id="UP000002528">
    <property type="component" value="Chromosome"/>
</dbReference>
<dbReference type="GO" id="GO:0005886">
    <property type="term" value="C:plasma membrane"/>
    <property type="evidence" value="ECO:0007669"/>
    <property type="project" value="UniProtKB-SubCell"/>
</dbReference>
<dbReference type="GO" id="GO:0046872">
    <property type="term" value="F:metal ion binding"/>
    <property type="evidence" value="ECO:0007669"/>
    <property type="project" value="UniProtKB-KW"/>
</dbReference>
<dbReference type="GO" id="GO:0008963">
    <property type="term" value="F:phospho-N-acetylmuramoyl-pentapeptide-transferase activity"/>
    <property type="evidence" value="ECO:0007669"/>
    <property type="project" value="UniProtKB-UniRule"/>
</dbReference>
<dbReference type="GO" id="GO:0051992">
    <property type="term" value="F:UDP-N-acetylmuramoyl-L-alanyl-D-glutamyl-meso-2,6-diaminopimelyl-D-alanyl-D-alanine:undecaprenyl-phosphate transferase activity"/>
    <property type="evidence" value="ECO:0007669"/>
    <property type="project" value="RHEA"/>
</dbReference>
<dbReference type="GO" id="GO:0051301">
    <property type="term" value="P:cell division"/>
    <property type="evidence" value="ECO:0007669"/>
    <property type="project" value="UniProtKB-KW"/>
</dbReference>
<dbReference type="GO" id="GO:0071555">
    <property type="term" value="P:cell wall organization"/>
    <property type="evidence" value="ECO:0007669"/>
    <property type="project" value="UniProtKB-KW"/>
</dbReference>
<dbReference type="GO" id="GO:0009252">
    <property type="term" value="P:peptidoglycan biosynthetic process"/>
    <property type="evidence" value="ECO:0007669"/>
    <property type="project" value="UniProtKB-UniRule"/>
</dbReference>
<dbReference type="GO" id="GO:0008360">
    <property type="term" value="P:regulation of cell shape"/>
    <property type="evidence" value="ECO:0007669"/>
    <property type="project" value="UniProtKB-KW"/>
</dbReference>
<dbReference type="CDD" id="cd06852">
    <property type="entry name" value="GT_MraY"/>
    <property type="match status" value="1"/>
</dbReference>
<dbReference type="HAMAP" id="MF_00038">
    <property type="entry name" value="MraY"/>
    <property type="match status" value="1"/>
</dbReference>
<dbReference type="InterPro" id="IPR000715">
    <property type="entry name" value="Glycosyl_transferase_4"/>
</dbReference>
<dbReference type="InterPro" id="IPR003524">
    <property type="entry name" value="PNAcMuramoyl-5peptid_Trfase"/>
</dbReference>
<dbReference type="InterPro" id="IPR018480">
    <property type="entry name" value="PNAcMuramoyl-5peptid_Trfase_CS"/>
</dbReference>
<dbReference type="NCBIfam" id="TIGR00445">
    <property type="entry name" value="mraY"/>
    <property type="match status" value="1"/>
</dbReference>
<dbReference type="PANTHER" id="PTHR22926">
    <property type="entry name" value="PHOSPHO-N-ACETYLMURAMOYL-PENTAPEPTIDE-TRANSFERASE"/>
    <property type="match status" value="1"/>
</dbReference>
<dbReference type="PANTHER" id="PTHR22926:SF5">
    <property type="entry name" value="PHOSPHO-N-ACETYLMURAMOYL-PENTAPEPTIDE-TRANSFERASE HOMOLOG"/>
    <property type="match status" value="1"/>
</dbReference>
<dbReference type="Pfam" id="PF00953">
    <property type="entry name" value="Glycos_transf_4"/>
    <property type="match status" value="1"/>
</dbReference>
<dbReference type="Pfam" id="PF10555">
    <property type="entry name" value="MraY_sig1"/>
    <property type="match status" value="1"/>
</dbReference>
<dbReference type="PROSITE" id="PS01347">
    <property type="entry name" value="MRAY_1"/>
    <property type="match status" value="1"/>
</dbReference>
<dbReference type="PROSITE" id="PS01348">
    <property type="entry name" value="MRAY_2"/>
    <property type="match status" value="1"/>
</dbReference>
<evidence type="ECO:0000255" key="1">
    <source>
        <dbReference type="HAMAP-Rule" id="MF_00038"/>
    </source>
</evidence>
<accession>Q4FPK2</accession>
<reference key="1">
    <citation type="journal article" date="2005" name="Science">
        <title>Genome streamlining in a cosmopolitan oceanic bacterium.</title>
        <authorList>
            <person name="Giovannoni S.J."/>
            <person name="Tripp H.J."/>
            <person name="Givan S."/>
            <person name="Podar M."/>
            <person name="Vergin K.L."/>
            <person name="Baptista D."/>
            <person name="Bibbs L."/>
            <person name="Eads J."/>
            <person name="Richardson T.H."/>
            <person name="Noordewier M."/>
            <person name="Rappe M.S."/>
            <person name="Short J.M."/>
            <person name="Carrington J.C."/>
            <person name="Mathur E.J."/>
        </authorList>
    </citation>
    <scope>NUCLEOTIDE SEQUENCE [LARGE SCALE GENOMIC DNA]</scope>
    <source>
        <strain>HTCC1062</strain>
    </source>
</reference>
<keyword id="KW-0131">Cell cycle</keyword>
<keyword id="KW-0132">Cell division</keyword>
<keyword id="KW-0997">Cell inner membrane</keyword>
<keyword id="KW-1003">Cell membrane</keyword>
<keyword id="KW-0133">Cell shape</keyword>
<keyword id="KW-0961">Cell wall biogenesis/degradation</keyword>
<keyword id="KW-0460">Magnesium</keyword>
<keyword id="KW-0472">Membrane</keyword>
<keyword id="KW-0479">Metal-binding</keyword>
<keyword id="KW-0573">Peptidoglycan synthesis</keyword>
<keyword id="KW-1185">Reference proteome</keyword>
<keyword id="KW-0808">Transferase</keyword>
<keyword id="KW-0812">Transmembrane</keyword>
<keyword id="KW-1133">Transmembrane helix</keyword>
<sequence length="361" mass="39904">MLYSLITQLIDQYSFLNVFKYLTFRTGLSMFTSMFVVLLIGTPFIKFFSARKILNPIRDDGPTEHIVKKIGTPTMGGVLILLGLFSGILLWGDLSNYHIWFLLFIVSGFGLLGAYDDYKKIKFKNSSGVSFKFKIISQILIAIVGIYGLTQLSQNTELTNLYFPFFKNLIINLGWFFIPFSIFIIVGSSNAVNLTDGLDGLATVPVILVAACFAFISYVTGNIVFSEYLNIPYLEGMGEVSVFCGSIIGACLGFLWFNAPPAKIFMGDTGSLALGGSLGAIGIITKHEIVLAITGGLFVLEAVSVIIQVFSFKLTGKRIFRMAPIHHHFEKKGWAESTVVIRFWIISIILAMIGLATLKLR</sequence>
<gene>
    <name evidence="1" type="primary">mraY</name>
    <name type="ordered locus">SAR11_0027</name>
</gene>
<name>MRAY_PELUB</name>
<feature type="chain" id="PRO_0000235463" description="Phospho-N-acetylmuramoyl-pentapeptide-transferase">
    <location>
        <begin position="1"/>
        <end position="361"/>
    </location>
</feature>
<feature type="transmembrane region" description="Helical" evidence="1">
    <location>
        <begin position="28"/>
        <end position="48"/>
    </location>
</feature>
<feature type="transmembrane region" description="Helical" evidence="1">
    <location>
        <begin position="70"/>
        <end position="90"/>
    </location>
</feature>
<feature type="transmembrane region" description="Helical" evidence="1">
    <location>
        <begin position="94"/>
        <end position="114"/>
    </location>
</feature>
<feature type="transmembrane region" description="Helical" evidence="1">
    <location>
        <begin position="129"/>
        <end position="149"/>
    </location>
</feature>
<feature type="transmembrane region" description="Helical" evidence="1">
    <location>
        <begin position="169"/>
        <end position="189"/>
    </location>
</feature>
<feature type="transmembrane region" description="Helical" evidence="1">
    <location>
        <begin position="205"/>
        <end position="225"/>
    </location>
</feature>
<feature type="transmembrane region" description="Helical" evidence="1">
    <location>
        <begin position="237"/>
        <end position="257"/>
    </location>
</feature>
<feature type="transmembrane region" description="Helical" evidence="1">
    <location>
        <begin position="264"/>
        <end position="284"/>
    </location>
</feature>
<feature type="transmembrane region" description="Helical" evidence="1">
    <location>
        <begin position="289"/>
        <end position="309"/>
    </location>
</feature>
<feature type="transmembrane region" description="Helical" evidence="1">
    <location>
        <begin position="338"/>
        <end position="358"/>
    </location>
</feature>
<proteinExistence type="inferred from homology"/>
<comment type="function">
    <text evidence="1">Catalyzes the initial step of the lipid cycle reactions in the biosynthesis of the cell wall peptidoglycan: transfers peptidoglycan precursor phospho-MurNAc-pentapeptide from UDP-MurNAc-pentapeptide onto the lipid carrier undecaprenyl phosphate, yielding undecaprenyl-pyrophosphoryl-MurNAc-pentapeptide, known as lipid I.</text>
</comment>
<comment type="catalytic activity">
    <reaction evidence="1">
        <text>UDP-N-acetyl-alpha-D-muramoyl-L-alanyl-gamma-D-glutamyl-meso-2,6-diaminopimeloyl-D-alanyl-D-alanine + di-trans,octa-cis-undecaprenyl phosphate = di-trans,octa-cis-undecaprenyl diphospho-N-acetyl-alpha-D-muramoyl-L-alanyl-D-glutamyl-meso-2,6-diaminopimeloyl-D-alanyl-D-alanine + UMP</text>
        <dbReference type="Rhea" id="RHEA:28386"/>
        <dbReference type="ChEBI" id="CHEBI:57865"/>
        <dbReference type="ChEBI" id="CHEBI:60392"/>
        <dbReference type="ChEBI" id="CHEBI:61386"/>
        <dbReference type="ChEBI" id="CHEBI:61387"/>
        <dbReference type="EC" id="2.7.8.13"/>
    </reaction>
</comment>
<comment type="cofactor">
    <cofactor evidence="1">
        <name>Mg(2+)</name>
        <dbReference type="ChEBI" id="CHEBI:18420"/>
    </cofactor>
</comment>
<comment type="pathway">
    <text evidence="1">Cell wall biogenesis; peptidoglycan biosynthesis.</text>
</comment>
<comment type="subcellular location">
    <subcellularLocation>
        <location evidence="1">Cell inner membrane</location>
        <topology evidence="1">Multi-pass membrane protein</topology>
    </subcellularLocation>
</comment>
<comment type="similarity">
    <text evidence="1">Belongs to the glycosyltransferase 4 family. MraY subfamily.</text>
</comment>